<proteinExistence type="inferred from homology"/>
<comment type="function">
    <text evidence="2">Accessory subunit of the mitochondrial membrane respiratory chain NADH dehydrogenase (Complex I), that is believed not to be involved in catalysis. Complex I functions in the transfer of electrons from NADH to the respiratory chain. The immediate electron acceptor for the enzyme is believed to be ubiquinone.</text>
</comment>
<comment type="subunit">
    <text evidence="2">Complex I is composed of 45 different subunits.</text>
</comment>
<comment type="subcellular location">
    <subcellularLocation>
        <location evidence="2">Mitochondrion inner membrane</location>
        <topology evidence="2">Peripheral membrane protein</topology>
        <orientation evidence="2">Matrix side</orientation>
    </subcellularLocation>
</comment>
<comment type="similarity">
    <text evidence="4">Belongs to the complex I NDUFA5 subunit family.</text>
</comment>
<protein>
    <recommendedName>
        <fullName>NADH dehydrogenase [ubiquinone] 1 alpha subcomplex subunit 5</fullName>
    </recommendedName>
    <alternativeName>
        <fullName>Complex I subunit B13</fullName>
    </alternativeName>
    <alternativeName>
        <fullName>Complex I-13kD-B</fullName>
        <shortName>CI-13kD-B</shortName>
    </alternativeName>
    <alternativeName>
        <fullName>NADH-ubiquinone oxidoreductase 13 kDa-B subunit</fullName>
    </alternativeName>
</protein>
<gene>
    <name type="primary">NDUFA5</name>
</gene>
<name>NDUA5_PANTR</name>
<evidence type="ECO:0000250" key="1">
    <source>
        <dbReference type="UniProtKB" id="P23935"/>
    </source>
</evidence>
<evidence type="ECO:0000250" key="2">
    <source>
        <dbReference type="UniProtKB" id="Q16718"/>
    </source>
</evidence>
<evidence type="ECO:0000250" key="3">
    <source>
        <dbReference type="UniProtKB" id="Q9CPP6"/>
    </source>
</evidence>
<evidence type="ECO:0000305" key="4"/>
<organism>
    <name type="scientific">Pan troglodytes</name>
    <name type="common">Chimpanzee</name>
    <dbReference type="NCBI Taxonomy" id="9598"/>
    <lineage>
        <taxon>Eukaryota</taxon>
        <taxon>Metazoa</taxon>
        <taxon>Chordata</taxon>
        <taxon>Craniata</taxon>
        <taxon>Vertebrata</taxon>
        <taxon>Euteleostomi</taxon>
        <taxon>Mammalia</taxon>
        <taxon>Eutheria</taxon>
        <taxon>Euarchontoglires</taxon>
        <taxon>Primates</taxon>
        <taxon>Haplorrhini</taxon>
        <taxon>Catarrhini</taxon>
        <taxon>Hominidae</taxon>
        <taxon>Pan</taxon>
    </lineage>
</organism>
<accession>Q0MQA2</accession>
<feature type="initiator methionine" description="Removed" evidence="1">
    <location>
        <position position="1"/>
    </location>
</feature>
<feature type="chain" id="PRO_0000251804" description="NADH dehydrogenase [ubiquinone] 1 alpha subcomplex subunit 5">
    <location>
        <begin position="2"/>
        <end position="116"/>
    </location>
</feature>
<feature type="modified residue" description="N-acetylalanine" evidence="1">
    <location>
        <position position="2"/>
    </location>
</feature>
<feature type="modified residue" description="N6-acetyllysine" evidence="2">
    <location>
        <position position="30"/>
    </location>
</feature>
<feature type="modified residue" description="N6-acetyllysine" evidence="3">
    <location>
        <position position="46"/>
    </location>
</feature>
<feature type="modified residue" description="N6-acetyllysine" evidence="2">
    <location>
        <position position="60"/>
    </location>
</feature>
<feature type="modified residue" description="N6-acetyllysine; alternate" evidence="3">
    <location>
        <position position="98"/>
    </location>
</feature>
<feature type="modified residue" description="N6-succinyllysine; alternate" evidence="3">
    <location>
        <position position="98"/>
    </location>
</feature>
<dbReference type="EMBL" id="DQ885732">
    <property type="protein sequence ID" value="ABH12241.1"/>
    <property type="molecule type" value="mRNA"/>
</dbReference>
<dbReference type="RefSeq" id="NP_001065265.1">
    <property type="nucleotide sequence ID" value="NM_001071797.1"/>
</dbReference>
<dbReference type="SMR" id="Q0MQA2"/>
<dbReference type="FunCoup" id="Q0MQA2">
    <property type="interactions" value="1047"/>
</dbReference>
<dbReference type="STRING" id="9598.ENSPTRP00000083278"/>
<dbReference type="PaxDb" id="9598-ENSPTRP00000047122"/>
<dbReference type="Ensembl" id="ENSPTRT00000096341.1">
    <property type="protein sequence ID" value="ENSPTRP00000083278.1"/>
    <property type="gene ID" value="ENSPTRG00000019637.6"/>
</dbReference>
<dbReference type="GeneID" id="463686"/>
<dbReference type="KEGG" id="ptr:463686"/>
<dbReference type="CTD" id="4698"/>
<dbReference type="VGNC" id="VGNC:14053">
    <property type="gene designation" value="NDUFA5"/>
</dbReference>
<dbReference type="eggNOG" id="KOG3365">
    <property type="taxonomic scope" value="Eukaryota"/>
</dbReference>
<dbReference type="GeneTree" id="ENSGT00390000008099"/>
<dbReference type="HOGENOM" id="CLU_099943_2_0_1"/>
<dbReference type="InParanoid" id="Q0MQA2"/>
<dbReference type="OMA" id="ENQWKWP"/>
<dbReference type="OrthoDB" id="2811at9604"/>
<dbReference type="TreeFam" id="TF313785"/>
<dbReference type="Proteomes" id="UP000002277">
    <property type="component" value="Chromosome 7"/>
</dbReference>
<dbReference type="Bgee" id="ENSPTRG00000019637">
    <property type="expression patterns" value="Expressed in skeletal muscle tissue and 21 other cell types or tissues"/>
</dbReference>
<dbReference type="GO" id="GO:0005743">
    <property type="term" value="C:mitochondrial inner membrane"/>
    <property type="evidence" value="ECO:0007669"/>
    <property type="project" value="UniProtKB-SubCell"/>
</dbReference>
<dbReference type="GO" id="GO:0045271">
    <property type="term" value="C:respiratory chain complex I"/>
    <property type="evidence" value="ECO:0000250"/>
    <property type="project" value="UniProtKB"/>
</dbReference>
<dbReference type="GO" id="GO:0022904">
    <property type="term" value="P:respiratory electron transport chain"/>
    <property type="evidence" value="ECO:0000318"/>
    <property type="project" value="GO_Central"/>
</dbReference>
<dbReference type="InterPro" id="IPR006806">
    <property type="entry name" value="NDUFA5"/>
</dbReference>
<dbReference type="PANTHER" id="PTHR12653:SF0">
    <property type="entry name" value="NADH DEHYDROGENASE [UBIQUINONE] 1 ALPHA SUBCOMPLEX SUBUNIT 5"/>
    <property type="match status" value="1"/>
</dbReference>
<dbReference type="PANTHER" id="PTHR12653">
    <property type="entry name" value="NADH-UBIQUINONE OXIDOREDUCTASE 13 KD-B SUBUNIT"/>
    <property type="match status" value="1"/>
</dbReference>
<dbReference type="Pfam" id="PF04716">
    <property type="entry name" value="ETC_C1_NDUFA5"/>
    <property type="match status" value="1"/>
</dbReference>
<reference key="1">
    <citation type="journal article" date="2006" name="Gene">
        <title>Adaptive selection of mitochondrial complex I subunits during primate radiation.</title>
        <authorList>
            <person name="Mishmar D."/>
            <person name="Ruiz-Pesini E."/>
            <person name="Mondragon-Palomino M."/>
            <person name="Procaccio V."/>
            <person name="Gaut B."/>
            <person name="Wallace D.C."/>
        </authorList>
    </citation>
    <scope>NUCLEOTIDE SEQUENCE [MRNA]</scope>
</reference>
<sequence length="116" mass="13459">MAGVLKKTTGLVGLAVCNTPHERLRILYTKILDVLEEIPKNAAYRKYTEQITNEKLAMVKAEPDVKKLEDQLQGGQLEEVILQAEHELNLARKMREWKLWEPLVEEPPADQWKWPI</sequence>
<keyword id="KW-0007">Acetylation</keyword>
<keyword id="KW-0249">Electron transport</keyword>
<keyword id="KW-0472">Membrane</keyword>
<keyword id="KW-0496">Mitochondrion</keyword>
<keyword id="KW-0999">Mitochondrion inner membrane</keyword>
<keyword id="KW-1185">Reference proteome</keyword>
<keyword id="KW-0679">Respiratory chain</keyword>
<keyword id="KW-0813">Transport</keyword>